<sequence length="173" mass="19989">MTEYFEVGKILSPHGLKGEVKVNATTDFPEERLATGSRLFIKNNKQYEELIVENTRRHKQFYLVKFEKIDDIDQAEKICSKELYVAETDQQELPEGSYYFKDILNCPVYDAETGEKLGVLENIETPGANDIWEIKPEKGKSFWIPNIESVVKKVDLANKRIEVTLLEGLRDEN</sequence>
<keyword id="KW-0143">Chaperone</keyword>
<keyword id="KW-0963">Cytoplasm</keyword>
<keyword id="KW-0690">Ribosome biogenesis</keyword>
<keyword id="KW-0698">rRNA processing</keyword>
<evidence type="ECO:0000255" key="1">
    <source>
        <dbReference type="HAMAP-Rule" id="MF_00014"/>
    </source>
</evidence>
<gene>
    <name evidence="1" type="primary">rimM</name>
    <name type="ordered locus">LJ_1514</name>
</gene>
<reference key="1">
    <citation type="journal article" date="2004" name="Proc. Natl. Acad. Sci. U.S.A.">
        <title>The genome sequence of the probiotic intestinal bacterium Lactobacillus johnsonii NCC 533.</title>
        <authorList>
            <person name="Pridmore R.D."/>
            <person name="Berger B."/>
            <person name="Desiere F."/>
            <person name="Vilanova D."/>
            <person name="Barretto C."/>
            <person name="Pittet A.-C."/>
            <person name="Zwahlen M.-C."/>
            <person name="Rouvet M."/>
            <person name="Altermann E."/>
            <person name="Barrangou R."/>
            <person name="Mollet B."/>
            <person name="Mercenier A."/>
            <person name="Klaenhammer T."/>
            <person name="Arigoni F."/>
            <person name="Schell M.A."/>
        </authorList>
    </citation>
    <scope>NUCLEOTIDE SEQUENCE [LARGE SCALE GENOMIC DNA]</scope>
    <source>
        <strain>CNCM I-1225 / La1 / NCC 533</strain>
    </source>
</reference>
<protein>
    <recommendedName>
        <fullName evidence="1">Ribosome maturation factor RimM</fullName>
    </recommendedName>
</protein>
<proteinExistence type="inferred from homology"/>
<accession>Q74IQ5</accession>
<feature type="chain" id="PRO_0000163303" description="Ribosome maturation factor RimM">
    <location>
        <begin position="1"/>
        <end position="173"/>
    </location>
</feature>
<feature type="domain" description="PRC barrel" evidence="1">
    <location>
        <begin position="95"/>
        <end position="169"/>
    </location>
</feature>
<comment type="function">
    <text evidence="1">An accessory protein needed during the final step in the assembly of 30S ribosomal subunit, possibly for assembly of the head region. Essential for efficient processing of 16S rRNA. May be needed both before and after RbfA during the maturation of 16S rRNA. It has affinity for free ribosomal 30S subunits but not for 70S ribosomes.</text>
</comment>
<comment type="subunit">
    <text evidence="1">Binds ribosomal protein uS19.</text>
</comment>
<comment type="subcellular location">
    <subcellularLocation>
        <location evidence="1">Cytoplasm</location>
    </subcellularLocation>
</comment>
<comment type="domain">
    <text evidence="1">The PRC barrel domain binds ribosomal protein uS19.</text>
</comment>
<comment type="similarity">
    <text evidence="1">Belongs to the RimM family.</text>
</comment>
<dbReference type="EMBL" id="AE017198">
    <property type="protein sequence ID" value="AAS09282.1"/>
    <property type="molecule type" value="Genomic_DNA"/>
</dbReference>
<dbReference type="RefSeq" id="WP_004895297.1">
    <property type="nucleotide sequence ID" value="NC_005362.1"/>
</dbReference>
<dbReference type="SMR" id="Q74IQ5"/>
<dbReference type="KEGG" id="ljo:LJ_1514"/>
<dbReference type="eggNOG" id="COG0806">
    <property type="taxonomic scope" value="Bacteria"/>
</dbReference>
<dbReference type="HOGENOM" id="CLU_077636_3_1_9"/>
<dbReference type="Proteomes" id="UP000000581">
    <property type="component" value="Chromosome"/>
</dbReference>
<dbReference type="GO" id="GO:0005737">
    <property type="term" value="C:cytoplasm"/>
    <property type="evidence" value="ECO:0007669"/>
    <property type="project" value="UniProtKB-SubCell"/>
</dbReference>
<dbReference type="GO" id="GO:0005840">
    <property type="term" value="C:ribosome"/>
    <property type="evidence" value="ECO:0007669"/>
    <property type="project" value="InterPro"/>
</dbReference>
<dbReference type="GO" id="GO:0043022">
    <property type="term" value="F:ribosome binding"/>
    <property type="evidence" value="ECO:0007669"/>
    <property type="project" value="InterPro"/>
</dbReference>
<dbReference type="GO" id="GO:0042274">
    <property type="term" value="P:ribosomal small subunit biogenesis"/>
    <property type="evidence" value="ECO:0007669"/>
    <property type="project" value="UniProtKB-UniRule"/>
</dbReference>
<dbReference type="GO" id="GO:0006364">
    <property type="term" value="P:rRNA processing"/>
    <property type="evidence" value="ECO:0007669"/>
    <property type="project" value="UniProtKB-UniRule"/>
</dbReference>
<dbReference type="Gene3D" id="2.30.30.240">
    <property type="entry name" value="PRC-barrel domain"/>
    <property type="match status" value="1"/>
</dbReference>
<dbReference type="Gene3D" id="2.40.30.60">
    <property type="entry name" value="RimM"/>
    <property type="match status" value="1"/>
</dbReference>
<dbReference type="HAMAP" id="MF_00014">
    <property type="entry name" value="Ribosome_mat_RimM"/>
    <property type="match status" value="1"/>
</dbReference>
<dbReference type="InterPro" id="IPR011033">
    <property type="entry name" value="PRC_barrel-like_sf"/>
</dbReference>
<dbReference type="InterPro" id="IPR056792">
    <property type="entry name" value="PRC_RimM"/>
</dbReference>
<dbReference type="InterPro" id="IPR011961">
    <property type="entry name" value="RimM"/>
</dbReference>
<dbReference type="InterPro" id="IPR002676">
    <property type="entry name" value="RimM_N"/>
</dbReference>
<dbReference type="InterPro" id="IPR036976">
    <property type="entry name" value="RimM_N_sf"/>
</dbReference>
<dbReference type="InterPro" id="IPR009000">
    <property type="entry name" value="Transl_B-barrel_sf"/>
</dbReference>
<dbReference type="NCBIfam" id="TIGR02273">
    <property type="entry name" value="16S_RimM"/>
    <property type="match status" value="1"/>
</dbReference>
<dbReference type="PANTHER" id="PTHR33692">
    <property type="entry name" value="RIBOSOME MATURATION FACTOR RIMM"/>
    <property type="match status" value="1"/>
</dbReference>
<dbReference type="PANTHER" id="PTHR33692:SF1">
    <property type="entry name" value="RIBOSOME MATURATION FACTOR RIMM"/>
    <property type="match status" value="1"/>
</dbReference>
<dbReference type="Pfam" id="PF24986">
    <property type="entry name" value="PRC_RimM"/>
    <property type="match status" value="1"/>
</dbReference>
<dbReference type="Pfam" id="PF01782">
    <property type="entry name" value="RimM"/>
    <property type="match status" value="1"/>
</dbReference>
<dbReference type="SUPFAM" id="SSF50346">
    <property type="entry name" value="PRC-barrel domain"/>
    <property type="match status" value="1"/>
</dbReference>
<dbReference type="SUPFAM" id="SSF50447">
    <property type="entry name" value="Translation proteins"/>
    <property type="match status" value="1"/>
</dbReference>
<name>RIMM_LACJO</name>
<organism>
    <name type="scientific">Lactobacillus johnsonii (strain CNCM I-12250 / La1 / NCC 533)</name>
    <dbReference type="NCBI Taxonomy" id="257314"/>
    <lineage>
        <taxon>Bacteria</taxon>
        <taxon>Bacillati</taxon>
        <taxon>Bacillota</taxon>
        <taxon>Bacilli</taxon>
        <taxon>Lactobacillales</taxon>
        <taxon>Lactobacillaceae</taxon>
        <taxon>Lactobacillus</taxon>
    </lineage>
</organism>